<gene>
    <name evidence="1" type="primary">rpsT</name>
    <name type="ordered locus">Arth_2242</name>
</gene>
<keyword id="KW-1185">Reference proteome</keyword>
<keyword id="KW-0687">Ribonucleoprotein</keyword>
<keyword id="KW-0689">Ribosomal protein</keyword>
<keyword id="KW-0694">RNA-binding</keyword>
<keyword id="KW-0699">rRNA-binding</keyword>
<sequence>MANIKSQKKRILTNEKARLRNNAVKSELKTAIRAVNTAVESTDKDAAAAALVAASRKLDKAVSKGVLHKNNAANRKSAISKKVNAL</sequence>
<proteinExistence type="inferred from homology"/>
<organism>
    <name type="scientific">Arthrobacter sp. (strain FB24)</name>
    <dbReference type="NCBI Taxonomy" id="290399"/>
    <lineage>
        <taxon>Bacteria</taxon>
        <taxon>Bacillati</taxon>
        <taxon>Actinomycetota</taxon>
        <taxon>Actinomycetes</taxon>
        <taxon>Micrococcales</taxon>
        <taxon>Micrococcaceae</taxon>
        <taxon>Arthrobacter</taxon>
    </lineage>
</organism>
<name>RS20_ARTS2</name>
<dbReference type="EMBL" id="CP000454">
    <property type="protein sequence ID" value="ABK03622.1"/>
    <property type="molecule type" value="Genomic_DNA"/>
</dbReference>
<dbReference type="RefSeq" id="WP_011692086.1">
    <property type="nucleotide sequence ID" value="NC_008541.1"/>
</dbReference>
<dbReference type="SMR" id="A0JX52"/>
<dbReference type="STRING" id="290399.Arth_2242"/>
<dbReference type="GeneID" id="97422052"/>
<dbReference type="KEGG" id="art:Arth_2242"/>
<dbReference type="eggNOG" id="COG0268">
    <property type="taxonomic scope" value="Bacteria"/>
</dbReference>
<dbReference type="HOGENOM" id="CLU_160655_0_1_11"/>
<dbReference type="OrthoDB" id="9807974at2"/>
<dbReference type="Proteomes" id="UP000000754">
    <property type="component" value="Chromosome"/>
</dbReference>
<dbReference type="GO" id="GO:0005829">
    <property type="term" value="C:cytosol"/>
    <property type="evidence" value="ECO:0007669"/>
    <property type="project" value="TreeGrafter"/>
</dbReference>
<dbReference type="GO" id="GO:0015935">
    <property type="term" value="C:small ribosomal subunit"/>
    <property type="evidence" value="ECO:0007669"/>
    <property type="project" value="TreeGrafter"/>
</dbReference>
<dbReference type="GO" id="GO:0070181">
    <property type="term" value="F:small ribosomal subunit rRNA binding"/>
    <property type="evidence" value="ECO:0007669"/>
    <property type="project" value="TreeGrafter"/>
</dbReference>
<dbReference type="GO" id="GO:0003735">
    <property type="term" value="F:structural constituent of ribosome"/>
    <property type="evidence" value="ECO:0007669"/>
    <property type="project" value="InterPro"/>
</dbReference>
<dbReference type="GO" id="GO:0006412">
    <property type="term" value="P:translation"/>
    <property type="evidence" value="ECO:0007669"/>
    <property type="project" value="UniProtKB-UniRule"/>
</dbReference>
<dbReference type="FunFam" id="1.20.58.110:FF:000001">
    <property type="entry name" value="30S ribosomal protein S20"/>
    <property type="match status" value="1"/>
</dbReference>
<dbReference type="Gene3D" id="1.20.58.110">
    <property type="entry name" value="Ribosomal protein S20"/>
    <property type="match status" value="1"/>
</dbReference>
<dbReference type="HAMAP" id="MF_00500">
    <property type="entry name" value="Ribosomal_bS20"/>
    <property type="match status" value="1"/>
</dbReference>
<dbReference type="InterPro" id="IPR002583">
    <property type="entry name" value="Ribosomal_bS20"/>
</dbReference>
<dbReference type="InterPro" id="IPR036510">
    <property type="entry name" value="Ribosomal_bS20_sf"/>
</dbReference>
<dbReference type="NCBIfam" id="TIGR00029">
    <property type="entry name" value="S20"/>
    <property type="match status" value="1"/>
</dbReference>
<dbReference type="PANTHER" id="PTHR33398">
    <property type="entry name" value="30S RIBOSOMAL PROTEIN S20"/>
    <property type="match status" value="1"/>
</dbReference>
<dbReference type="PANTHER" id="PTHR33398:SF1">
    <property type="entry name" value="SMALL RIBOSOMAL SUBUNIT PROTEIN BS20C"/>
    <property type="match status" value="1"/>
</dbReference>
<dbReference type="Pfam" id="PF01649">
    <property type="entry name" value="Ribosomal_S20p"/>
    <property type="match status" value="1"/>
</dbReference>
<dbReference type="SUPFAM" id="SSF46992">
    <property type="entry name" value="Ribosomal protein S20"/>
    <property type="match status" value="1"/>
</dbReference>
<evidence type="ECO:0000255" key="1">
    <source>
        <dbReference type="HAMAP-Rule" id="MF_00500"/>
    </source>
</evidence>
<evidence type="ECO:0000305" key="2"/>
<reference key="1">
    <citation type="journal article" date="2013" name="Stand. Genomic Sci.">
        <title>Complete genome sequence of Arthrobacter sp. strain FB24.</title>
        <authorList>
            <person name="Nakatsu C.H."/>
            <person name="Barabote R."/>
            <person name="Thompson S."/>
            <person name="Bruce D."/>
            <person name="Detter C."/>
            <person name="Brettin T."/>
            <person name="Han C."/>
            <person name="Beasley F."/>
            <person name="Chen W."/>
            <person name="Konopka A."/>
            <person name="Xie G."/>
        </authorList>
    </citation>
    <scope>NUCLEOTIDE SEQUENCE [LARGE SCALE GENOMIC DNA]</scope>
    <source>
        <strain>FB24</strain>
    </source>
</reference>
<feature type="chain" id="PRO_1000014546" description="Small ribosomal subunit protein bS20">
    <location>
        <begin position="1"/>
        <end position="86"/>
    </location>
</feature>
<accession>A0JX52</accession>
<comment type="function">
    <text evidence="1">Binds directly to 16S ribosomal RNA.</text>
</comment>
<comment type="similarity">
    <text evidence="1">Belongs to the bacterial ribosomal protein bS20 family.</text>
</comment>
<protein>
    <recommendedName>
        <fullName evidence="1">Small ribosomal subunit protein bS20</fullName>
    </recommendedName>
    <alternativeName>
        <fullName evidence="2">30S ribosomal protein S20</fullName>
    </alternativeName>
</protein>